<keyword id="KW-0067">ATP-binding</keyword>
<keyword id="KW-0173">Coenzyme A biosynthesis</keyword>
<keyword id="KW-0963">Cytoplasm</keyword>
<keyword id="KW-0418">Kinase</keyword>
<keyword id="KW-0547">Nucleotide-binding</keyword>
<keyword id="KW-0808">Transferase</keyword>
<protein>
    <recommendedName>
        <fullName evidence="1">Pantothenate kinase</fullName>
        <ecNumber evidence="1">2.7.1.33</ecNumber>
    </recommendedName>
    <alternativeName>
        <fullName evidence="1">Pantothenic acid kinase</fullName>
    </alternativeName>
</protein>
<sequence length="306" mass="35759">MLNEFINFETISRSDWQRFYQEDQVSLTPEELESIRSLNDKIDVQEVRDIYLPLINLIRIYHRAAEDLTFSKGIFLQKAQANRPFIIGISGSVAVGKSTTSRLLQLLLQRTFPKAKVDMVTTDGFLFPNQVLIDKGILNRKGFPESYDMPLLLNFLDTVKNGGDVNIPVYSHEIYDIVPGLTQKISQPNFLIVEGINVFQNPINQRLYMSDYFDFSIYIDADVKNIKTWYLERFQTLLELARKDENNYYHRFTKFTKEEALSLAQKTWKEINLVNLENYIEPTRNRAELILHKGDSHKIDLIHLKK</sequence>
<proteinExistence type="inferred from homology"/>
<dbReference type="EC" id="2.7.1.33" evidence="1"/>
<dbReference type="EMBL" id="CP000024">
    <property type="protein sequence ID" value="AAV62392.1"/>
    <property type="molecule type" value="Genomic_DNA"/>
</dbReference>
<dbReference type="RefSeq" id="WP_002947590.1">
    <property type="nucleotide sequence ID" value="NC_006449.1"/>
</dbReference>
<dbReference type="SMR" id="Q5M079"/>
<dbReference type="GeneID" id="66898693"/>
<dbReference type="KEGG" id="stc:str0799"/>
<dbReference type="HOGENOM" id="CLU_053818_1_1_9"/>
<dbReference type="UniPathway" id="UPA00241">
    <property type="reaction ID" value="UER00352"/>
</dbReference>
<dbReference type="GO" id="GO:0005737">
    <property type="term" value="C:cytoplasm"/>
    <property type="evidence" value="ECO:0007669"/>
    <property type="project" value="UniProtKB-SubCell"/>
</dbReference>
<dbReference type="GO" id="GO:0005524">
    <property type="term" value="F:ATP binding"/>
    <property type="evidence" value="ECO:0007669"/>
    <property type="project" value="UniProtKB-UniRule"/>
</dbReference>
<dbReference type="GO" id="GO:0004594">
    <property type="term" value="F:pantothenate kinase activity"/>
    <property type="evidence" value="ECO:0007669"/>
    <property type="project" value="UniProtKB-UniRule"/>
</dbReference>
<dbReference type="GO" id="GO:0015937">
    <property type="term" value="P:coenzyme A biosynthetic process"/>
    <property type="evidence" value="ECO:0007669"/>
    <property type="project" value="UniProtKB-UniRule"/>
</dbReference>
<dbReference type="CDD" id="cd02025">
    <property type="entry name" value="PanK"/>
    <property type="match status" value="1"/>
</dbReference>
<dbReference type="Gene3D" id="3.40.50.300">
    <property type="entry name" value="P-loop containing nucleotide triphosphate hydrolases"/>
    <property type="match status" value="1"/>
</dbReference>
<dbReference type="HAMAP" id="MF_00215">
    <property type="entry name" value="Pantothen_kinase_1"/>
    <property type="match status" value="1"/>
</dbReference>
<dbReference type="InterPro" id="IPR027417">
    <property type="entry name" value="P-loop_NTPase"/>
</dbReference>
<dbReference type="InterPro" id="IPR004566">
    <property type="entry name" value="PanK"/>
</dbReference>
<dbReference type="InterPro" id="IPR006083">
    <property type="entry name" value="PRK/URK"/>
</dbReference>
<dbReference type="NCBIfam" id="TIGR00554">
    <property type="entry name" value="panK_bact"/>
    <property type="match status" value="1"/>
</dbReference>
<dbReference type="PANTHER" id="PTHR10285">
    <property type="entry name" value="URIDINE KINASE"/>
    <property type="match status" value="1"/>
</dbReference>
<dbReference type="Pfam" id="PF00485">
    <property type="entry name" value="PRK"/>
    <property type="match status" value="1"/>
</dbReference>
<dbReference type="PIRSF" id="PIRSF000545">
    <property type="entry name" value="Pantothenate_kin"/>
    <property type="match status" value="1"/>
</dbReference>
<dbReference type="SUPFAM" id="SSF52540">
    <property type="entry name" value="P-loop containing nucleoside triphosphate hydrolases"/>
    <property type="match status" value="1"/>
</dbReference>
<comment type="catalytic activity">
    <reaction evidence="1">
        <text>(R)-pantothenate + ATP = (R)-4'-phosphopantothenate + ADP + H(+)</text>
        <dbReference type="Rhea" id="RHEA:16373"/>
        <dbReference type="ChEBI" id="CHEBI:10986"/>
        <dbReference type="ChEBI" id="CHEBI:15378"/>
        <dbReference type="ChEBI" id="CHEBI:29032"/>
        <dbReference type="ChEBI" id="CHEBI:30616"/>
        <dbReference type="ChEBI" id="CHEBI:456216"/>
        <dbReference type="EC" id="2.7.1.33"/>
    </reaction>
</comment>
<comment type="pathway">
    <text evidence="1">Cofactor biosynthesis; coenzyme A biosynthesis; CoA from (R)-pantothenate: step 1/5.</text>
</comment>
<comment type="subcellular location">
    <subcellularLocation>
        <location evidence="1">Cytoplasm</location>
    </subcellularLocation>
</comment>
<comment type="similarity">
    <text evidence="1">Belongs to the prokaryotic pantothenate kinase family.</text>
</comment>
<gene>
    <name evidence="1" type="primary">coaA</name>
    <name type="ordered locus">str0799</name>
</gene>
<feature type="chain" id="PRO_1000043271" description="Pantothenate kinase">
    <location>
        <begin position="1"/>
        <end position="306"/>
    </location>
</feature>
<feature type="binding site" evidence="1">
    <location>
        <begin position="91"/>
        <end position="98"/>
    </location>
    <ligand>
        <name>ATP</name>
        <dbReference type="ChEBI" id="CHEBI:30616"/>
    </ligand>
</feature>
<reference key="1">
    <citation type="journal article" date="2004" name="Nat. Biotechnol.">
        <title>Complete sequence and comparative genome analysis of the dairy bacterium Streptococcus thermophilus.</title>
        <authorList>
            <person name="Bolotin A."/>
            <person name="Quinquis B."/>
            <person name="Renault P."/>
            <person name="Sorokin A."/>
            <person name="Ehrlich S.D."/>
            <person name="Kulakauskas S."/>
            <person name="Lapidus A."/>
            <person name="Goltsman E."/>
            <person name="Mazur M."/>
            <person name="Pusch G.D."/>
            <person name="Fonstein M."/>
            <person name="Overbeek R."/>
            <person name="Kyprides N."/>
            <person name="Purnelle B."/>
            <person name="Prozzi D."/>
            <person name="Ngui K."/>
            <person name="Masuy D."/>
            <person name="Hancy F."/>
            <person name="Burteau S."/>
            <person name="Boutry M."/>
            <person name="Delcour J."/>
            <person name="Goffeau A."/>
            <person name="Hols P."/>
        </authorList>
    </citation>
    <scope>NUCLEOTIDE SEQUENCE [LARGE SCALE GENOMIC DNA]</scope>
    <source>
        <strain>CNRZ 1066</strain>
    </source>
</reference>
<evidence type="ECO:0000255" key="1">
    <source>
        <dbReference type="HAMAP-Rule" id="MF_00215"/>
    </source>
</evidence>
<accession>Q5M079</accession>
<organism>
    <name type="scientific">Streptococcus thermophilus (strain CNRZ 1066)</name>
    <dbReference type="NCBI Taxonomy" id="299768"/>
    <lineage>
        <taxon>Bacteria</taxon>
        <taxon>Bacillati</taxon>
        <taxon>Bacillota</taxon>
        <taxon>Bacilli</taxon>
        <taxon>Lactobacillales</taxon>
        <taxon>Streptococcaceae</taxon>
        <taxon>Streptococcus</taxon>
    </lineage>
</organism>
<name>COAA_STRT1</name>